<keyword id="KW-0051">Antiviral defense</keyword>
<keyword id="KW-0202">Cytokine</keyword>
<keyword id="KW-1015">Disulfide bond</keyword>
<keyword id="KW-0325">Glycoprotein</keyword>
<keyword id="KW-0372">Hormone</keyword>
<keyword id="KW-0635">Pregnancy</keyword>
<keyword id="KW-1185">Reference proteome</keyword>
<keyword id="KW-0964">Secreted</keyword>
<proteinExistence type="evidence at transcript level"/>
<feature type="chain" id="PRO_0000154307" description="Interferon tau-2">
    <location>
        <begin position="1"/>
        <end position="172"/>
    </location>
</feature>
<feature type="glycosylation site" description="N-linked (GlcNAc...) asparagine" evidence="2">
    <location>
        <position position="78"/>
    </location>
</feature>
<feature type="disulfide bond" evidence="1">
    <location>
        <begin position="1"/>
        <end position="99"/>
    </location>
</feature>
<feature type="disulfide bond" evidence="1">
    <location>
        <begin position="29"/>
        <end position="139"/>
    </location>
</feature>
<feature type="sequence variant" description="In IFN-tau2B and IFN-tau2C." evidence="3">
    <original>D</original>
    <variation>N</variation>
    <location>
        <position position="6"/>
    </location>
</feature>
<feature type="sequence variant" description="In IFN-tau2C." evidence="3">
    <original>E</original>
    <variation>V</variation>
    <location>
        <position position="135"/>
    </location>
</feature>
<feature type="sequence variant" description="In IFN-tau2C." evidence="3">
    <original>M</original>
    <variation>V</variation>
    <location>
        <position position="146"/>
    </location>
</feature>
<comment type="function">
    <text>Paracrine hormone primarily responsible for maternal recognition of pregnancy. Interacts with endometrial receptors, probably type I interferon receptors, and blocks estrogen receptor expression, preventing the estrogen-induced increase in oxytocin receptor expression in the endometrium. This results in the suppression of the pulsatile endometrial release of the luteolytic hormone prostaglandin F2-alpha, hindering the regression of the corpus luteum (luteolysis) and therefore a return to ovarian cyclicity. This, and a possible direct effect of IFN-tau on prostaglandin synthesis, leads in turn to continued ovarian progesterone secretion, which stimulates the secretion by the endometrium of the nutrients required for the growth of the conceptus. In summary, displays particularly high antiviral and antiproliferative potency concurrently with particular weak cytotoxicity, high antiluteolytic activity and immunomodulatory properties. In contrast with other IFNs, IFN-tau is not virally inducible.</text>
</comment>
<comment type="subcellular location">
    <subcellularLocation>
        <location>Secreted</location>
    </subcellularLocation>
    <text>Secreted into the uterine lumen.</text>
</comment>
<comment type="tissue specificity">
    <text>Constitutively and exclusively expressed in the mononuclear cells of the extraembryonic trophectoderm.</text>
</comment>
<comment type="developmental stage">
    <text>Major secretory product synthesized by the bovine conceptus between days 15 and 25 of pregnancy.</text>
</comment>
<comment type="polymorphism">
    <text evidence="3">There seems to be three variants of IFN-tau 2: A (shown here), B and C.</text>
</comment>
<comment type="miscellaneous">
    <text>IFN-tau genes are intronless. They evolved from IFN-omega genes in the ruminantia suborder and have continued to duplicate independently in different lineages of the ruminantia. They code for proteins very similar in sequence but with different biological potency and pattern of expression.</text>
</comment>
<comment type="similarity">
    <text evidence="4">Belongs to the alpha/beta interferon family. IFN-alphaII subfamily.</text>
</comment>
<sequence length="172" mass="19892">CYLSEDHMLGARENLRLLARMNRLSPHPCLQDRKDFGLPQEMVEGNQLQKDQAISVLHEMLQQCFNLFYTEHSSAAWNTTLLEQLCTGLQQQLEDLDACLGQVMEEKDSDMGRMGPILTVKKYFQGIHVYLKEKEYSDCAWEIIRMEMMRALSSSTTLQKRLRKMGGDLNSL</sequence>
<reference key="1">
    <citation type="journal article" date="2001" name="Endocrinology">
        <title>Polymorphic forms of expressed bovine interferon-tau genes: relative transcript abundance during early placental development, promoter sequences of genes and biological activity of protein products.</title>
        <authorList>
            <person name="Ealy A.D."/>
            <person name="Larson S.F."/>
            <person name="Liu L."/>
            <person name="Alexenko A.P."/>
            <person name="Winkelman G.L."/>
            <person name="Kubisch H.M."/>
            <person name="Bixby J.A."/>
            <person name="Roberts R.M."/>
        </authorList>
    </citation>
    <scope>NUCLEOTIDE SEQUENCE [MRNA]</scope>
    <scope>VARIANTS ASN-6; VAL-135 AND VAL-146</scope>
    <scope>POLYMORPHISM</scope>
    <source>
        <tissue>Embryo</tissue>
    </source>
</reference>
<reference key="2">
    <citation type="journal article" date="1995" name="J. Interferon Cytokine Res.">
        <title>A three-dimensional model of interferon-tau.</title>
        <authorList>
            <person name="Senda T."/>
            <person name="Saitoh S."/>
            <person name="Mitsui Y."/>
            <person name="Li J."/>
            <person name="Roberts R.M."/>
        </authorList>
    </citation>
    <scope>3D-STRUCTURE MODELING</scope>
</reference>
<reference key="3">
    <citation type="journal article" date="1998" name="Biochimie">
        <title>IFN-tau: a novel subtype I IFN1. Structural characteristics, non-ubiquitous expression, structure-function relationships, a pregnancy hormonal embryonic signal and cross-species therapeutic potentialities.</title>
        <authorList>
            <person name="Martal J.L."/>
            <person name="Chene N.M."/>
            <person name="Huynh L.P."/>
            <person name="L'Haridon R.M."/>
            <person name="Reinaud P.B."/>
            <person name="Guillomot M.W."/>
            <person name="Charlier M.A."/>
            <person name="Charpigny S.Y."/>
        </authorList>
    </citation>
    <scope>REVIEW</scope>
</reference>
<gene>
    <name type="primary">IFNT2</name>
</gene>
<accession>P56830</accession>
<name>IFNT2_BOVIN</name>
<dbReference type="EMBL" id="AF196321">
    <property type="protein sequence ID" value="AAF08672.1"/>
    <property type="molecule type" value="mRNA"/>
</dbReference>
<dbReference type="EMBL" id="AF196322">
    <property type="protein sequence ID" value="AAF08673.1"/>
    <property type="molecule type" value="mRNA"/>
</dbReference>
<dbReference type="EMBL" id="AF196323">
    <property type="protein sequence ID" value="AAF08674.1"/>
    <property type="molecule type" value="mRNA"/>
</dbReference>
<dbReference type="SMR" id="P56830"/>
<dbReference type="GlyCosmos" id="P56830">
    <property type="glycosylation" value="1 site, No reported glycans"/>
</dbReference>
<dbReference type="GlyGen" id="P56830">
    <property type="glycosylation" value="1 site"/>
</dbReference>
<dbReference type="InParanoid" id="P56830"/>
<dbReference type="Proteomes" id="UP000009136">
    <property type="component" value="Unplaced"/>
</dbReference>
<dbReference type="GO" id="GO:0005615">
    <property type="term" value="C:extracellular space"/>
    <property type="evidence" value="ECO:0000318"/>
    <property type="project" value="GO_Central"/>
</dbReference>
<dbReference type="GO" id="GO:0005125">
    <property type="term" value="F:cytokine activity"/>
    <property type="evidence" value="ECO:0000318"/>
    <property type="project" value="GO_Central"/>
</dbReference>
<dbReference type="GO" id="GO:0005179">
    <property type="term" value="F:hormone activity"/>
    <property type="evidence" value="ECO:0007669"/>
    <property type="project" value="UniProtKB-KW"/>
</dbReference>
<dbReference type="GO" id="GO:0005132">
    <property type="term" value="F:type I interferon receptor binding"/>
    <property type="evidence" value="ECO:0000318"/>
    <property type="project" value="GO_Central"/>
</dbReference>
<dbReference type="GO" id="GO:0002250">
    <property type="term" value="P:adaptive immune response"/>
    <property type="evidence" value="ECO:0000318"/>
    <property type="project" value="GO_Central"/>
</dbReference>
<dbReference type="GO" id="GO:0002312">
    <property type="term" value="P:B cell activation involved in immune response"/>
    <property type="evidence" value="ECO:0000318"/>
    <property type="project" value="GO_Central"/>
</dbReference>
<dbReference type="GO" id="GO:0051607">
    <property type="term" value="P:defense response to virus"/>
    <property type="evidence" value="ECO:0007669"/>
    <property type="project" value="UniProtKB-KW"/>
</dbReference>
<dbReference type="GO" id="GO:0007565">
    <property type="term" value="P:female pregnancy"/>
    <property type="evidence" value="ECO:0007669"/>
    <property type="project" value="UniProtKB-KW"/>
</dbReference>
<dbReference type="GO" id="GO:0006959">
    <property type="term" value="P:humoral immune response"/>
    <property type="evidence" value="ECO:0000318"/>
    <property type="project" value="GO_Central"/>
</dbReference>
<dbReference type="GO" id="GO:0002323">
    <property type="term" value="P:natural killer cell activation involved in immune response"/>
    <property type="evidence" value="ECO:0000318"/>
    <property type="project" value="GO_Central"/>
</dbReference>
<dbReference type="GO" id="GO:0009891">
    <property type="term" value="P:positive regulation of biosynthetic process"/>
    <property type="evidence" value="ECO:0007669"/>
    <property type="project" value="UniProtKB-ARBA"/>
</dbReference>
<dbReference type="GO" id="GO:0043330">
    <property type="term" value="P:response to exogenous dsRNA"/>
    <property type="evidence" value="ECO:0000318"/>
    <property type="project" value="GO_Central"/>
</dbReference>
<dbReference type="GO" id="GO:0002286">
    <property type="term" value="P:T cell activation involved in immune response"/>
    <property type="evidence" value="ECO:0000318"/>
    <property type="project" value="GO_Central"/>
</dbReference>
<dbReference type="GO" id="GO:0060337">
    <property type="term" value="P:type I interferon-mediated signaling pathway"/>
    <property type="evidence" value="ECO:0000318"/>
    <property type="project" value="GO_Central"/>
</dbReference>
<dbReference type="CDD" id="cd00095">
    <property type="entry name" value="IFab"/>
    <property type="match status" value="1"/>
</dbReference>
<dbReference type="FunFam" id="1.20.1250.10:FF:000001">
    <property type="entry name" value="Interferon alpha"/>
    <property type="match status" value="1"/>
</dbReference>
<dbReference type="Gene3D" id="1.20.1250.10">
    <property type="match status" value="1"/>
</dbReference>
<dbReference type="InterPro" id="IPR009079">
    <property type="entry name" value="4_helix_cytokine-like_core"/>
</dbReference>
<dbReference type="InterPro" id="IPR000471">
    <property type="entry name" value="Interferon_alpha/beta/delta"/>
</dbReference>
<dbReference type="PANTHER" id="PTHR11691:SF37">
    <property type="entry name" value="INTERFERON OMEGA-1"/>
    <property type="match status" value="1"/>
</dbReference>
<dbReference type="PANTHER" id="PTHR11691">
    <property type="entry name" value="TYPE I INTERFERON"/>
    <property type="match status" value="1"/>
</dbReference>
<dbReference type="Pfam" id="PF00143">
    <property type="entry name" value="Interferon"/>
    <property type="match status" value="1"/>
</dbReference>
<dbReference type="PRINTS" id="PR00266">
    <property type="entry name" value="INTERFERONAB"/>
</dbReference>
<dbReference type="SMART" id="SM00076">
    <property type="entry name" value="IFabd"/>
    <property type="match status" value="1"/>
</dbReference>
<dbReference type="SUPFAM" id="SSF47266">
    <property type="entry name" value="4-helical cytokines"/>
    <property type="match status" value="1"/>
</dbReference>
<dbReference type="PROSITE" id="PS00252">
    <property type="entry name" value="INTERFERON_A_B_D"/>
    <property type="match status" value="1"/>
</dbReference>
<evidence type="ECO:0000250" key="1"/>
<evidence type="ECO:0000255" key="2"/>
<evidence type="ECO:0000269" key="3">
    <source>
    </source>
</evidence>
<evidence type="ECO:0000305" key="4"/>
<organism>
    <name type="scientific">Bos taurus</name>
    <name type="common">Bovine</name>
    <dbReference type="NCBI Taxonomy" id="9913"/>
    <lineage>
        <taxon>Eukaryota</taxon>
        <taxon>Metazoa</taxon>
        <taxon>Chordata</taxon>
        <taxon>Craniata</taxon>
        <taxon>Vertebrata</taxon>
        <taxon>Euteleostomi</taxon>
        <taxon>Mammalia</taxon>
        <taxon>Eutheria</taxon>
        <taxon>Laurasiatheria</taxon>
        <taxon>Artiodactyla</taxon>
        <taxon>Ruminantia</taxon>
        <taxon>Pecora</taxon>
        <taxon>Bovidae</taxon>
        <taxon>Bovinae</taxon>
        <taxon>Bos</taxon>
    </lineage>
</organism>
<protein>
    <recommendedName>
        <fullName>Interferon tau-2</fullName>
        <shortName>IFN-tau-2</shortName>
    </recommendedName>
    <alternativeName>
        <fullName>Antiluteolysin</fullName>
    </alternativeName>
    <alternativeName>
        <fullName>Trophoblast antiluteolytic protein</fullName>
    </alternativeName>
    <alternativeName>
        <fullName>Trophoblast protein 1</fullName>
        <shortName>TP-1</shortName>
    </alternativeName>
    <alternativeName>
        <fullName>Trophoblastin</fullName>
    </alternativeName>
</protein>